<comment type="function">
    <text evidence="1">This protein is involved in the repair of mismatches in DNA. It is possible that it carries out the mismatch recognition step. This protein has a weak ATPase activity.</text>
</comment>
<comment type="similarity">
    <text evidence="1">Belongs to the DNA mismatch repair MutS family.</text>
</comment>
<feature type="chain" id="PRO_0000335143" description="DNA mismatch repair protein MutS">
    <location>
        <begin position="1"/>
        <end position="932"/>
    </location>
</feature>
<feature type="binding site" evidence="1">
    <location>
        <begin position="620"/>
        <end position="627"/>
    </location>
    <ligand>
        <name>ATP</name>
        <dbReference type="ChEBI" id="CHEBI:30616"/>
    </ligand>
</feature>
<sequence>MAQLTPMMQQYVETKEQYKDCILFYRLGDFYEMFFEDALVASKELEITLTGKNCGQEERAPMCGIPYHAAEGYISKLIGKGYKVAICEQVEDPKLAKGIVKREVIRIVTPGTNLNTQTLDETRNNYLMGIIFTDEHCGISTVDITTGDYYVTEVENNRKILDEIYKYTPSEIVCNPEFFHCGLDVEDLKNRYQIAVSTFEDWYYDSEQSVKTLKEHFKVGSLDGLGLKDYSVGVNAAGAILKYLYNTQKNSLSHLTHITPYVTSRYMVIDSSSRRNLELTETLREKQKRGSLLWVLDKTKTAMGARMLRSFVEQPLITMDEISARYDAISELNDNVITREEIREYLNYIYDLERLMGKISYKSANPRDLIAFASSLSMLPHIKYLLSTCESALLKQIHEEMDALDDLQNLIDRSIAEEPPIGIKEGGIIKEGFHTEVDTLRKAKTEGKVWLAELEAKEKEQTGIKNLKVKYNRVFGYYLEVTNSYANLVPENWIRKQTLSNAERYTTPELKELEDKILNAEDRLFSLEYDLFAEIRDQIAEEVKRIQKTAKAVANIDAFASLAYVAERNQFIRPELNTNGTIDIKEGRHPVVEQMIPNDMFVSNDTYLDNAEKRISIITGPNMAGKSTYMRQTALIVLMAQVGSFVPASYANIGIVDRIFTRVGASDDLASGQSTFMVEMTEVANILRNATKNSLLILDEIGRGTSTFDGLSIAWAVIEHISNTSMLGAKTLFATHYHELTELEGKISGVNNYCIAVKEQGEDIVFLRKIIGGGADKSYGIQVAKLAGVPNSVLVRAREIVDQLSENDIAEKARHIVSAAEISNLTPETEGEVNTNKMYTTKVNATEVITTEVNTAKMNTTEMVSNQESVEQPRNFGQMSFFITEDTKQKKASSEFSEKLVQEINQFDLANMTPVEALLKLDKLQKKIRSHT</sequence>
<name>MUTS_LACP7</name>
<keyword id="KW-0067">ATP-binding</keyword>
<keyword id="KW-0227">DNA damage</keyword>
<keyword id="KW-0234">DNA repair</keyword>
<keyword id="KW-0238">DNA-binding</keyword>
<keyword id="KW-0547">Nucleotide-binding</keyword>
<keyword id="KW-1185">Reference proteome</keyword>
<proteinExistence type="inferred from homology"/>
<reference key="1">
    <citation type="submission" date="2007-11" db="EMBL/GenBank/DDBJ databases">
        <title>Complete genome sequence of Clostridium phytofermentans ISDg.</title>
        <authorList>
            <person name="Leschine S.B."/>
            <person name="Warnick T.A."/>
            <person name="Blanchard J.L."/>
            <person name="Schnell D.J."/>
            <person name="Petit E.L."/>
            <person name="LaTouf W.G."/>
            <person name="Copeland A."/>
            <person name="Lucas S."/>
            <person name="Lapidus A."/>
            <person name="Barry K."/>
            <person name="Glavina del Rio T."/>
            <person name="Dalin E."/>
            <person name="Tice H."/>
            <person name="Pitluck S."/>
            <person name="Kiss H."/>
            <person name="Brettin T."/>
            <person name="Bruce D."/>
            <person name="Detter J.C."/>
            <person name="Han C."/>
            <person name="Kuske C."/>
            <person name="Schmutz J."/>
            <person name="Larimer F."/>
            <person name="Land M."/>
            <person name="Hauser L."/>
            <person name="Kyrpides N."/>
            <person name="Kim E.A."/>
            <person name="Richardson P."/>
        </authorList>
    </citation>
    <scope>NUCLEOTIDE SEQUENCE [LARGE SCALE GENOMIC DNA]</scope>
    <source>
        <strain>ATCC 700394 / DSM 18823 / ISDg</strain>
    </source>
</reference>
<organism>
    <name type="scientific">Lachnoclostridium phytofermentans (strain ATCC 700394 / DSM 18823 / ISDg)</name>
    <name type="common">Clostridium phytofermentans</name>
    <dbReference type="NCBI Taxonomy" id="357809"/>
    <lineage>
        <taxon>Bacteria</taxon>
        <taxon>Bacillati</taxon>
        <taxon>Bacillota</taxon>
        <taxon>Clostridia</taxon>
        <taxon>Lachnospirales</taxon>
        <taxon>Lachnospiraceae</taxon>
    </lineage>
</organism>
<accession>A9KL10</accession>
<gene>
    <name evidence="1" type="primary">mutS</name>
    <name type="ordered locus">Cphy_2381</name>
</gene>
<evidence type="ECO:0000255" key="1">
    <source>
        <dbReference type="HAMAP-Rule" id="MF_00096"/>
    </source>
</evidence>
<dbReference type="EMBL" id="CP000885">
    <property type="protein sequence ID" value="ABX42742.1"/>
    <property type="molecule type" value="Genomic_DNA"/>
</dbReference>
<dbReference type="RefSeq" id="WP_012200396.1">
    <property type="nucleotide sequence ID" value="NC_010001.1"/>
</dbReference>
<dbReference type="SMR" id="A9KL10"/>
<dbReference type="STRING" id="357809.Cphy_2381"/>
<dbReference type="KEGG" id="cpy:Cphy_2381"/>
<dbReference type="eggNOG" id="COG0249">
    <property type="taxonomic scope" value="Bacteria"/>
</dbReference>
<dbReference type="HOGENOM" id="CLU_002472_3_0_9"/>
<dbReference type="OrthoDB" id="9802448at2"/>
<dbReference type="Proteomes" id="UP000000370">
    <property type="component" value="Chromosome"/>
</dbReference>
<dbReference type="GO" id="GO:0005829">
    <property type="term" value="C:cytosol"/>
    <property type="evidence" value="ECO:0007669"/>
    <property type="project" value="TreeGrafter"/>
</dbReference>
<dbReference type="GO" id="GO:0005524">
    <property type="term" value="F:ATP binding"/>
    <property type="evidence" value="ECO:0007669"/>
    <property type="project" value="UniProtKB-UniRule"/>
</dbReference>
<dbReference type="GO" id="GO:0140664">
    <property type="term" value="F:ATP-dependent DNA damage sensor activity"/>
    <property type="evidence" value="ECO:0007669"/>
    <property type="project" value="InterPro"/>
</dbReference>
<dbReference type="GO" id="GO:0003684">
    <property type="term" value="F:damaged DNA binding"/>
    <property type="evidence" value="ECO:0007669"/>
    <property type="project" value="UniProtKB-UniRule"/>
</dbReference>
<dbReference type="GO" id="GO:0030983">
    <property type="term" value="F:mismatched DNA binding"/>
    <property type="evidence" value="ECO:0007669"/>
    <property type="project" value="InterPro"/>
</dbReference>
<dbReference type="GO" id="GO:0006298">
    <property type="term" value="P:mismatch repair"/>
    <property type="evidence" value="ECO:0007669"/>
    <property type="project" value="UniProtKB-UniRule"/>
</dbReference>
<dbReference type="CDD" id="cd03284">
    <property type="entry name" value="ABC_MutS1"/>
    <property type="match status" value="1"/>
</dbReference>
<dbReference type="FunFam" id="1.10.1420.10:FF:000001">
    <property type="entry name" value="DNA mismatch repair protein MutS"/>
    <property type="match status" value="1"/>
</dbReference>
<dbReference type="FunFam" id="3.40.1170.10:FF:000001">
    <property type="entry name" value="DNA mismatch repair protein MutS"/>
    <property type="match status" value="1"/>
</dbReference>
<dbReference type="FunFam" id="3.40.50.300:FF:001579">
    <property type="entry name" value="DNA mismatch repair protein MutS"/>
    <property type="match status" value="1"/>
</dbReference>
<dbReference type="Gene3D" id="1.10.1420.10">
    <property type="match status" value="2"/>
</dbReference>
<dbReference type="Gene3D" id="3.40.1170.10">
    <property type="entry name" value="DNA repair protein MutS, domain I"/>
    <property type="match status" value="1"/>
</dbReference>
<dbReference type="Gene3D" id="3.30.420.110">
    <property type="entry name" value="MutS, connector domain"/>
    <property type="match status" value="1"/>
</dbReference>
<dbReference type="Gene3D" id="3.40.50.300">
    <property type="entry name" value="P-loop containing nucleotide triphosphate hydrolases"/>
    <property type="match status" value="1"/>
</dbReference>
<dbReference type="HAMAP" id="MF_00096">
    <property type="entry name" value="MutS"/>
    <property type="match status" value="1"/>
</dbReference>
<dbReference type="InterPro" id="IPR005748">
    <property type="entry name" value="DNA_mismatch_repair_MutS"/>
</dbReference>
<dbReference type="InterPro" id="IPR007695">
    <property type="entry name" value="DNA_mismatch_repair_MutS-lik_N"/>
</dbReference>
<dbReference type="InterPro" id="IPR017261">
    <property type="entry name" value="DNA_mismatch_repair_MutS/MSH"/>
</dbReference>
<dbReference type="InterPro" id="IPR000432">
    <property type="entry name" value="DNA_mismatch_repair_MutS_C"/>
</dbReference>
<dbReference type="InterPro" id="IPR007861">
    <property type="entry name" value="DNA_mismatch_repair_MutS_clamp"/>
</dbReference>
<dbReference type="InterPro" id="IPR007696">
    <property type="entry name" value="DNA_mismatch_repair_MutS_core"/>
</dbReference>
<dbReference type="InterPro" id="IPR016151">
    <property type="entry name" value="DNA_mismatch_repair_MutS_N"/>
</dbReference>
<dbReference type="InterPro" id="IPR036187">
    <property type="entry name" value="DNA_mismatch_repair_MutS_sf"/>
</dbReference>
<dbReference type="InterPro" id="IPR007860">
    <property type="entry name" value="DNA_mmatch_repair_MutS_con_dom"/>
</dbReference>
<dbReference type="InterPro" id="IPR045076">
    <property type="entry name" value="MutS"/>
</dbReference>
<dbReference type="InterPro" id="IPR036678">
    <property type="entry name" value="MutS_con_dom_sf"/>
</dbReference>
<dbReference type="InterPro" id="IPR027417">
    <property type="entry name" value="P-loop_NTPase"/>
</dbReference>
<dbReference type="NCBIfam" id="TIGR01070">
    <property type="entry name" value="mutS1"/>
    <property type="match status" value="1"/>
</dbReference>
<dbReference type="NCBIfam" id="NF003810">
    <property type="entry name" value="PRK05399.1"/>
    <property type="match status" value="1"/>
</dbReference>
<dbReference type="PANTHER" id="PTHR11361:SF34">
    <property type="entry name" value="DNA MISMATCH REPAIR PROTEIN MSH1, MITOCHONDRIAL"/>
    <property type="match status" value="1"/>
</dbReference>
<dbReference type="PANTHER" id="PTHR11361">
    <property type="entry name" value="DNA MISMATCH REPAIR PROTEIN MUTS FAMILY MEMBER"/>
    <property type="match status" value="1"/>
</dbReference>
<dbReference type="Pfam" id="PF01624">
    <property type="entry name" value="MutS_I"/>
    <property type="match status" value="1"/>
</dbReference>
<dbReference type="Pfam" id="PF05188">
    <property type="entry name" value="MutS_II"/>
    <property type="match status" value="1"/>
</dbReference>
<dbReference type="Pfam" id="PF05192">
    <property type="entry name" value="MutS_III"/>
    <property type="match status" value="1"/>
</dbReference>
<dbReference type="Pfam" id="PF05190">
    <property type="entry name" value="MutS_IV"/>
    <property type="match status" value="1"/>
</dbReference>
<dbReference type="Pfam" id="PF00488">
    <property type="entry name" value="MutS_V"/>
    <property type="match status" value="1"/>
</dbReference>
<dbReference type="PIRSF" id="PIRSF037677">
    <property type="entry name" value="DNA_mis_repair_Msh6"/>
    <property type="match status" value="1"/>
</dbReference>
<dbReference type="SMART" id="SM00534">
    <property type="entry name" value="MUTSac"/>
    <property type="match status" value="1"/>
</dbReference>
<dbReference type="SMART" id="SM00533">
    <property type="entry name" value="MUTSd"/>
    <property type="match status" value="1"/>
</dbReference>
<dbReference type="SUPFAM" id="SSF55271">
    <property type="entry name" value="DNA repair protein MutS, domain I"/>
    <property type="match status" value="1"/>
</dbReference>
<dbReference type="SUPFAM" id="SSF53150">
    <property type="entry name" value="DNA repair protein MutS, domain II"/>
    <property type="match status" value="1"/>
</dbReference>
<dbReference type="SUPFAM" id="SSF48334">
    <property type="entry name" value="DNA repair protein MutS, domain III"/>
    <property type="match status" value="1"/>
</dbReference>
<dbReference type="SUPFAM" id="SSF52540">
    <property type="entry name" value="P-loop containing nucleoside triphosphate hydrolases"/>
    <property type="match status" value="1"/>
</dbReference>
<dbReference type="PROSITE" id="PS00486">
    <property type="entry name" value="DNA_MISMATCH_REPAIR_2"/>
    <property type="match status" value="1"/>
</dbReference>
<protein>
    <recommendedName>
        <fullName evidence="1">DNA mismatch repair protein MutS</fullName>
    </recommendedName>
</protein>